<reference key="1">
    <citation type="journal article" date="2004" name="Proc. Natl. Acad. Sci. U.S.A.">
        <title>Genome sequence of the enterobacterial phytopathogen Erwinia carotovora subsp. atroseptica and characterization of virulence factors.</title>
        <authorList>
            <person name="Bell K.S."/>
            <person name="Sebaihia M."/>
            <person name="Pritchard L."/>
            <person name="Holden M.T.G."/>
            <person name="Hyman L.J."/>
            <person name="Holeva M.C."/>
            <person name="Thomson N.R."/>
            <person name="Bentley S.D."/>
            <person name="Churcher L.J.C."/>
            <person name="Mungall K."/>
            <person name="Atkin R."/>
            <person name="Bason N."/>
            <person name="Brooks K."/>
            <person name="Chillingworth T."/>
            <person name="Clark K."/>
            <person name="Doggett J."/>
            <person name="Fraser A."/>
            <person name="Hance Z."/>
            <person name="Hauser H."/>
            <person name="Jagels K."/>
            <person name="Moule S."/>
            <person name="Norbertczak H."/>
            <person name="Ormond D."/>
            <person name="Price C."/>
            <person name="Quail M.A."/>
            <person name="Sanders M."/>
            <person name="Walker D."/>
            <person name="Whitehead S."/>
            <person name="Salmond G.P.C."/>
            <person name="Birch P.R.J."/>
            <person name="Parkhill J."/>
            <person name="Toth I.K."/>
        </authorList>
    </citation>
    <scope>NUCLEOTIDE SEQUENCE [LARGE SCALE GENOMIC DNA]</scope>
    <source>
        <strain>SCRI 1043 / ATCC BAA-672</strain>
    </source>
</reference>
<sequence length="212" mass="22892">MAKNYYEITLALAGICQSAHLVQQLAHTGNCNNDVLHTSLNSVLNLNPASTLAVYGNDEQNLKVGLETLLGILNTSSNKGAGAELSRYTFSLIALERKLNAKSAALDELGKRIGQLERQLEHFELLSETIVSALAAIYVDVISTLGPRIQVTGSPEVLKNSQVQAKVRAALLAGIRSTVLWQQIGGGRLQLMFSRSQLVKEAKQILARCPSV</sequence>
<protein>
    <recommendedName>
        <fullName evidence="1">High frequency lysogenization protein HflD homolog</fullName>
    </recommendedName>
</protein>
<accession>Q6D4E8</accession>
<organism>
    <name type="scientific">Pectobacterium atrosepticum (strain SCRI 1043 / ATCC BAA-672)</name>
    <name type="common">Erwinia carotovora subsp. atroseptica</name>
    <dbReference type="NCBI Taxonomy" id="218491"/>
    <lineage>
        <taxon>Bacteria</taxon>
        <taxon>Pseudomonadati</taxon>
        <taxon>Pseudomonadota</taxon>
        <taxon>Gammaproteobacteria</taxon>
        <taxon>Enterobacterales</taxon>
        <taxon>Pectobacteriaceae</taxon>
        <taxon>Pectobacterium</taxon>
    </lineage>
</organism>
<proteinExistence type="inferred from homology"/>
<keyword id="KW-0997">Cell inner membrane</keyword>
<keyword id="KW-1003">Cell membrane</keyword>
<keyword id="KW-0175">Coiled coil</keyword>
<keyword id="KW-0963">Cytoplasm</keyword>
<keyword id="KW-0472">Membrane</keyword>
<keyword id="KW-1185">Reference proteome</keyword>
<comment type="subcellular location">
    <subcellularLocation>
        <location>Cytoplasm</location>
    </subcellularLocation>
    <subcellularLocation>
        <location evidence="1">Cell inner membrane</location>
        <topology evidence="1">Peripheral membrane protein</topology>
        <orientation evidence="1">Cytoplasmic side</orientation>
    </subcellularLocation>
</comment>
<comment type="similarity">
    <text evidence="1">Belongs to the HflD family.</text>
</comment>
<gene>
    <name evidence="1" type="primary">hflD</name>
    <name type="ordered locus">ECA2443</name>
</gene>
<dbReference type="EMBL" id="BX950851">
    <property type="protein sequence ID" value="CAG75345.1"/>
    <property type="molecule type" value="Genomic_DNA"/>
</dbReference>
<dbReference type="RefSeq" id="WP_011093994.1">
    <property type="nucleotide sequence ID" value="NC_004547.2"/>
</dbReference>
<dbReference type="SMR" id="Q6D4E8"/>
<dbReference type="STRING" id="218491.ECA2443"/>
<dbReference type="KEGG" id="eca:ECA2443"/>
<dbReference type="eggNOG" id="COG2915">
    <property type="taxonomic scope" value="Bacteria"/>
</dbReference>
<dbReference type="HOGENOM" id="CLU_098920_0_0_6"/>
<dbReference type="OrthoDB" id="9788031at2"/>
<dbReference type="Proteomes" id="UP000007966">
    <property type="component" value="Chromosome"/>
</dbReference>
<dbReference type="GO" id="GO:0005737">
    <property type="term" value="C:cytoplasm"/>
    <property type="evidence" value="ECO:0007669"/>
    <property type="project" value="UniProtKB-SubCell"/>
</dbReference>
<dbReference type="GO" id="GO:0005886">
    <property type="term" value="C:plasma membrane"/>
    <property type="evidence" value="ECO:0007669"/>
    <property type="project" value="UniProtKB-SubCell"/>
</dbReference>
<dbReference type="FunFam" id="1.10.3890.10:FF:000001">
    <property type="entry name" value="High frequency lysogenization protein HflD homolog"/>
    <property type="match status" value="1"/>
</dbReference>
<dbReference type="Gene3D" id="1.10.3890.10">
    <property type="entry name" value="HflD-like"/>
    <property type="match status" value="1"/>
</dbReference>
<dbReference type="HAMAP" id="MF_00695">
    <property type="entry name" value="HflD_protein"/>
    <property type="match status" value="1"/>
</dbReference>
<dbReference type="InterPro" id="IPR007451">
    <property type="entry name" value="HflD"/>
</dbReference>
<dbReference type="InterPro" id="IPR035932">
    <property type="entry name" value="HflD-like_sf"/>
</dbReference>
<dbReference type="NCBIfam" id="NF001246">
    <property type="entry name" value="PRK00218.1-2"/>
    <property type="match status" value="1"/>
</dbReference>
<dbReference type="NCBIfam" id="NF001248">
    <property type="entry name" value="PRK00218.1-4"/>
    <property type="match status" value="1"/>
</dbReference>
<dbReference type="NCBIfam" id="NF001249">
    <property type="entry name" value="PRK00218.1-5"/>
    <property type="match status" value="1"/>
</dbReference>
<dbReference type="PANTHER" id="PTHR38100">
    <property type="entry name" value="HIGH FREQUENCY LYSOGENIZATION PROTEIN HFLD"/>
    <property type="match status" value="1"/>
</dbReference>
<dbReference type="PANTHER" id="PTHR38100:SF1">
    <property type="entry name" value="HIGH FREQUENCY LYSOGENIZATION PROTEIN HFLD"/>
    <property type="match status" value="1"/>
</dbReference>
<dbReference type="Pfam" id="PF04356">
    <property type="entry name" value="DUF489"/>
    <property type="match status" value="1"/>
</dbReference>
<dbReference type="SUPFAM" id="SSF101322">
    <property type="entry name" value="YcfC-like"/>
    <property type="match status" value="1"/>
</dbReference>
<evidence type="ECO:0000255" key="1">
    <source>
        <dbReference type="HAMAP-Rule" id="MF_00695"/>
    </source>
</evidence>
<name>HFLD_PECAS</name>
<feature type="chain" id="PRO_1000045419" description="High frequency lysogenization protein HflD homolog">
    <location>
        <begin position="1"/>
        <end position="212"/>
    </location>
</feature>
<feature type="coiled-coil region" evidence="1">
    <location>
        <begin position="92"/>
        <end position="128"/>
    </location>
</feature>